<proteinExistence type="inferred from homology"/>
<organism>
    <name type="scientific">Chlamydia trachomatis serovar L2b (strain UCH-1/proctitis)</name>
    <dbReference type="NCBI Taxonomy" id="471473"/>
    <lineage>
        <taxon>Bacteria</taxon>
        <taxon>Pseudomonadati</taxon>
        <taxon>Chlamydiota</taxon>
        <taxon>Chlamydiia</taxon>
        <taxon>Chlamydiales</taxon>
        <taxon>Chlamydiaceae</taxon>
        <taxon>Chlamydia/Chlamydophila group</taxon>
        <taxon>Chlamydia</taxon>
    </lineage>
</organism>
<comment type="function">
    <text evidence="1">Catalyzes the attachment of serine to tRNA(Ser). Is also able to aminoacylate tRNA(Sec) with serine, to form the misacylated tRNA L-seryl-tRNA(Sec), which will be further converted into selenocysteinyl-tRNA(Sec).</text>
</comment>
<comment type="catalytic activity">
    <reaction evidence="1">
        <text>tRNA(Ser) + L-serine + ATP = L-seryl-tRNA(Ser) + AMP + diphosphate + H(+)</text>
        <dbReference type="Rhea" id="RHEA:12292"/>
        <dbReference type="Rhea" id="RHEA-COMP:9669"/>
        <dbReference type="Rhea" id="RHEA-COMP:9703"/>
        <dbReference type="ChEBI" id="CHEBI:15378"/>
        <dbReference type="ChEBI" id="CHEBI:30616"/>
        <dbReference type="ChEBI" id="CHEBI:33019"/>
        <dbReference type="ChEBI" id="CHEBI:33384"/>
        <dbReference type="ChEBI" id="CHEBI:78442"/>
        <dbReference type="ChEBI" id="CHEBI:78533"/>
        <dbReference type="ChEBI" id="CHEBI:456215"/>
        <dbReference type="EC" id="6.1.1.11"/>
    </reaction>
</comment>
<comment type="catalytic activity">
    <reaction evidence="1">
        <text>tRNA(Sec) + L-serine + ATP = L-seryl-tRNA(Sec) + AMP + diphosphate + H(+)</text>
        <dbReference type="Rhea" id="RHEA:42580"/>
        <dbReference type="Rhea" id="RHEA-COMP:9742"/>
        <dbReference type="Rhea" id="RHEA-COMP:10128"/>
        <dbReference type="ChEBI" id="CHEBI:15378"/>
        <dbReference type="ChEBI" id="CHEBI:30616"/>
        <dbReference type="ChEBI" id="CHEBI:33019"/>
        <dbReference type="ChEBI" id="CHEBI:33384"/>
        <dbReference type="ChEBI" id="CHEBI:78442"/>
        <dbReference type="ChEBI" id="CHEBI:78533"/>
        <dbReference type="ChEBI" id="CHEBI:456215"/>
        <dbReference type="EC" id="6.1.1.11"/>
    </reaction>
</comment>
<comment type="pathway">
    <text evidence="1">Aminoacyl-tRNA biosynthesis; selenocysteinyl-tRNA(Sec) biosynthesis; L-seryl-tRNA(Sec) from L-serine and tRNA(Sec): step 1/1.</text>
</comment>
<comment type="subunit">
    <text evidence="1">Homodimer. The tRNA molecule binds across the dimer.</text>
</comment>
<comment type="subcellular location">
    <subcellularLocation>
        <location evidence="1">Cytoplasm</location>
    </subcellularLocation>
</comment>
<comment type="domain">
    <text evidence="1">Consists of two distinct domains, a catalytic core and a N-terminal extension that is involved in tRNA binding.</text>
</comment>
<comment type="similarity">
    <text evidence="1">Belongs to the class-II aminoacyl-tRNA synthetase family. Type-1 seryl-tRNA synthetase subfamily.</text>
</comment>
<gene>
    <name evidence="1" type="primary">serS</name>
    <name type="ordered locus">CTLon_0098</name>
</gene>
<evidence type="ECO:0000255" key="1">
    <source>
        <dbReference type="HAMAP-Rule" id="MF_00176"/>
    </source>
</evidence>
<feature type="chain" id="PRO_1000098050" description="Serine--tRNA ligase">
    <location>
        <begin position="1"/>
        <end position="428"/>
    </location>
</feature>
<feature type="binding site" evidence="1">
    <location>
        <begin position="231"/>
        <end position="233"/>
    </location>
    <ligand>
        <name>L-serine</name>
        <dbReference type="ChEBI" id="CHEBI:33384"/>
    </ligand>
</feature>
<feature type="binding site" evidence="1">
    <location>
        <begin position="262"/>
        <end position="264"/>
    </location>
    <ligand>
        <name>ATP</name>
        <dbReference type="ChEBI" id="CHEBI:30616"/>
    </ligand>
</feature>
<feature type="binding site" evidence="1">
    <location>
        <position position="278"/>
    </location>
    <ligand>
        <name>ATP</name>
        <dbReference type="ChEBI" id="CHEBI:30616"/>
    </ligand>
</feature>
<feature type="binding site" evidence="1">
    <location>
        <position position="285"/>
    </location>
    <ligand>
        <name>L-serine</name>
        <dbReference type="ChEBI" id="CHEBI:33384"/>
    </ligand>
</feature>
<feature type="binding site" evidence="1">
    <location>
        <begin position="349"/>
        <end position="352"/>
    </location>
    <ligand>
        <name>ATP</name>
        <dbReference type="ChEBI" id="CHEBI:30616"/>
    </ligand>
</feature>
<feature type="binding site" evidence="1">
    <location>
        <position position="384"/>
    </location>
    <ligand>
        <name>L-serine</name>
        <dbReference type="ChEBI" id="CHEBI:33384"/>
    </ligand>
</feature>
<name>SYS_CHLTB</name>
<protein>
    <recommendedName>
        <fullName evidence="1">Serine--tRNA ligase</fullName>
        <ecNumber evidence="1">6.1.1.11</ecNumber>
    </recommendedName>
    <alternativeName>
        <fullName evidence="1">Seryl-tRNA synthetase</fullName>
        <shortName evidence="1">SerRS</shortName>
    </alternativeName>
    <alternativeName>
        <fullName evidence="1">Seryl-tRNA(Ser/Sec) synthetase</fullName>
    </alternativeName>
</protein>
<keyword id="KW-0030">Aminoacyl-tRNA synthetase</keyword>
<keyword id="KW-0067">ATP-binding</keyword>
<keyword id="KW-0963">Cytoplasm</keyword>
<keyword id="KW-0436">Ligase</keyword>
<keyword id="KW-0547">Nucleotide-binding</keyword>
<keyword id="KW-0648">Protein biosynthesis</keyword>
<accession>B0BAI4</accession>
<dbReference type="EC" id="6.1.1.11" evidence="1"/>
<dbReference type="EMBL" id="AM884177">
    <property type="protein sequence ID" value="CAP06496.1"/>
    <property type="molecule type" value="Genomic_DNA"/>
</dbReference>
<dbReference type="RefSeq" id="WP_009873332.1">
    <property type="nucleotide sequence ID" value="NC_010280.2"/>
</dbReference>
<dbReference type="SMR" id="B0BAI4"/>
<dbReference type="KEGG" id="ctl:CTLon_0098"/>
<dbReference type="HOGENOM" id="CLU_023797_1_1_0"/>
<dbReference type="UniPathway" id="UPA00906">
    <property type="reaction ID" value="UER00895"/>
</dbReference>
<dbReference type="Proteomes" id="UP001154401">
    <property type="component" value="Chromosome"/>
</dbReference>
<dbReference type="GO" id="GO:0005737">
    <property type="term" value="C:cytoplasm"/>
    <property type="evidence" value="ECO:0007669"/>
    <property type="project" value="UniProtKB-SubCell"/>
</dbReference>
<dbReference type="GO" id="GO:0005524">
    <property type="term" value="F:ATP binding"/>
    <property type="evidence" value="ECO:0007669"/>
    <property type="project" value="UniProtKB-UniRule"/>
</dbReference>
<dbReference type="GO" id="GO:0004828">
    <property type="term" value="F:serine-tRNA ligase activity"/>
    <property type="evidence" value="ECO:0007669"/>
    <property type="project" value="UniProtKB-UniRule"/>
</dbReference>
<dbReference type="GO" id="GO:0016260">
    <property type="term" value="P:selenocysteine biosynthetic process"/>
    <property type="evidence" value="ECO:0007669"/>
    <property type="project" value="UniProtKB-UniRule"/>
</dbReference>
<dbReference type="GO" id="GO:0006434">
    <property type="term" value="P:seryl-tRNA aminoacylation"/>
    <property type="evidence" value="ECO:0007669"/>
    <property type="project" value="UniProtKB-UniRule"/>
</dbReference>
<dbReference type="CDD" id="cd00770">
    <property type="entry name" value="SerRS_core"/>
    <property type="match status" value="1"/>
</dbReference>
<dbReference type="Gene3D" id="3.30.930.10">
    <property type="entry name" value="Bira Bifunctional Protein, Domain 2"/>
    <property type="match status" value="1"/>
</dbReference>
<dbReference type="Gene3D" id="1.10.287.40">
    <property type="entry name" value="Serine-tRNA synthetase, tRNA binding domain"/>
    <property type="match status" value="1"/>
</dbReference>
<dbReference type="HAMAP" id="MF_00176">
    <property type="entry name" value="Ser_tRNA_synth_type1"/>
    <property type="match status" value="1"/>
</dbReference>
<dbReference type="InterPro" id="IPR002314">
    <property type="entry name" value="aa-tRNA-synt_IIb"/>
</dbReference>
<dbReference type="InterPro" id="IPR006195">
    <property type="entry name" value="aa-tRNA-synth_II"/>
</dbReference>
<dbReference type="InterPro" id="IPR045864">
    <property type="entry name" value="aa-tRNA-synth_II/BPL/LPL"/>
</dbReference>
<dbReference type="InterPro" id="IPR002317">
    <property type="entry name" value="Ser-tRNA-ligase_type_1"/>
</dbReference>
<dbReference type="InterPro" id="IPR015866">
    <property type="entry name" value="Ser-tRNA-synth_1_N"/>
</dbReference>
<dbReference type="InterPro" id="IPR042103">
    <property type="entry name" value="SerRS_1_N_sf"/>
</dbReference>
<dbReference type="InterPro" id="IPR033729">
    <property type="entry name" value="SerRS_core"/>
</dbReference>
<dbReference type="InterPro" id="IPR010978">
    <property type="entry name" value="tRNA-bd_arm"/>
</dbReference>
<dbReference type="NCBIfam" id="TIGR00414">
    <property type="entry name" value="serS"/>
    <property type="match status" value="1"/>
</dbReference>
<dbReference type="PANTHER" id="PTHR43697:SF1">
    <property type="entry name" value="SERINE--TRNA LIGASE"/>
    <property type="match status" value="1"/>
</dbReference>
<dbReference type="PANTHER" id="PTHR43697">
    <property type="entry name" value="SERYL-TRNA SYNTHETASE"/>
    <property type="match status" value="1"/>
</dbReference>
<dbReference type="Pfam" id="PF02403">
    <property type="entry name" value="Seryl_tRNA_N"/>
    <property type="match status" value="1"/>
</dbReference>
<dbReference type="Pfam" id="PF00587">
    <property type="entry name" value="tRNA-synt_2b"/>
    <property type="match status" value="1"/>
</dbReference>
<dbReference type="PIRSF" id="PIRSF001529">
    <property type="entry name" value="Ser-tRNA-synth_IIa"/>
    <property type="match status" value="1"/>
</dbReference>
<dbReference type="PRINTS" id="PR00981">
    <property type="entry name" value="TRNASYNTHSER"/>
</dbReference>
<dbReference type="SUPFAM" id="SSF55681">
    <property type="entry name" value="Class II aaRS and biotin synthetases"/>
    <property type="match status" value="1"/>
</dbReference>
<dbReference type="SUPFAM" id="SSF46589">
    <property type="entry name" value="tRNA-binding arm"/>
    <property type="match status" value="1"/>
</dbReference>
<dbReference type="PROSITE" id="PS50862">
    <property type="entry name" value="AA_TRNA_LIGASE_II"/>
    <property type="match status" value="1"/>
</dbReference>
<reference key="1">
    <citation type="journal article" date="2008" name="Genome Res.">
        <title>Chlamydia trachomatis: genome sequence analysis of lymphogranuloma venereum isolates.</title>
        <authorList>
            <person name="Thomson N.R."/>
            <person name="Holden M.T.G."/>
            <person name="Carder C."/>
            <person name="Lennard N."/>
            <person name="Lockey S.J."/>
            <person name="Marsh P."/>
            <person name="Skipp P."/>
            <person name="O'Connor C.D."/>
            <person name="Goodhead I."/>
            <person name="Norbertzcak H."/>
            <person name="Harris B."/>
            <person name="Ormond D."/>
            <person name="Rance R."/>
            <person name="Quail M.A."/>
            <person name="Parkhill J."/>
            <person name="Stephens R.S."/>
            <person name="Clarke I.N."/>
        </authorList>
    </citation>
    <scope>NUCLEOTIDE SEQUENCE [LARGE SCALE GENOMIC DNA]</scope>
    <source>
        <strain>UCH-1/proctitis</strain>
    </source>
</reference>
<sequence>MLDIRLIRKEPKECESRLQKKDPAISLERLLDLDKTVRQLKADSEALLAKRKVLSGQIHKAKVANENADALIQEVNTIADQLVAFETTLQEQEALLEDLMARLPNYPDEDVPVSPDKTGNQMIKSHGEVPTFPFPPKHHMQLNEALQILDFKLPAKTTGSGWPAYCNEGVLLEWALLTYLLNKQQAHGFQLWLPPLLVKRDILFGSGQIPKFDGQYYRVEDGDRSLFLIPTAEVVLNGFHSQEILNEQDLPLCYAAFTPCFRREAGAGGAHERGLVRVHQFHKVEMFAFTTPEQEEVVYQKMLHVVEEILSELQLPYQLSLLSTGDMSFTAKKTIDAEVWLPGQKAFYEVSSISKCGDFQARRSETRYRDAQGKLHFVNTLNGSGLATPRLLVAILENYQQADGSVVIPSVLRPYMNNQEILLPKTVR</sequence>